<sequence>MNIDEELTTILKNNSNLKKMKEFLEQNIFFSLTGYEGFFKAFLIKKIKEYSKTGKIILIVKDEHTLDKIKNDLQVITNQIFELNYFSPLVYKGIGSKSTIFNERIKFLFNFYKKNPGIYITVLKSLLSKIPDKNTLLKNIYKIEKNTNINTADIEKTLITLGYEKTLRVTIPGEFTVKGEIIDIYPFGEQNPIRIALNFDKIEEIKKFNPLTQLKHDNEILEFQILPKKEIIWDDKTINTLKTKIKSVEYKKILEELDFKKETKTEEMFYPLVANTYLGDEIEKHTPIVNFEINNFEKEIEKIHQEYEKLYKEAEEAGKNIIDPKRILLNYKTFNLKSDVLFSKIKSLKSKETIEFKIESERNFFSNIALTKEEFENWLKNGFKIIIAAESESQKEKLKYIFKELPKVSIEVLKISSSLIIEKEKIAIILESNIFNTGQKINKAFESSKTKAIDSFVEIEKNSHVVHINHGIGIFRQIKRIKTSSLEKDYIEIEYAEGEKLFIPIEQTNLIQKYIGSDPKNIKLDKISSKTWIKNKANAKKRIEEIADKLIELYSKRESIKGIKYPEDNELQLLFESEFPYDETPDQIRAIKEIKEDMMSFKVMDRLLCGDVGFGKTEVAMRAAFKAVMGNKQVIVLSPTTILAEQHFNTFKKRFKNFPIKIEVLSRFIKNNAESRILKELKSGKIDIIIGTHKILSKKFTCKNLGLIIIDEEQRFGVKEKEKLKEIRISVDCLALSATPIPRSLHMSLIKLRDISVLKIPPQNRVKIEAYLESFSELLIKHAIESELSRDGQVFLVNHNIEELYYLKTLIERLTPYARIAIIHGKLTGEEIENIMHNFIKKAYQILLATTIIENGIDIPNANTIIINNANKFGLAQLYQLKGRVGRGSQKAYAYFLYQDSEKLNERSIERLRAITEFSELGAGFKIAMKDMEIRGVGNLLGREQHGEIESIGLDYYLTMLNKAIEKKMGKISSDEEEVDIKINYSGFIPENYAKNEQDKILIYKKIFKIQTEEESKKIRSELHNDFGPIPEEINSLLMLAELKILAKDLNITKLKEKNRALEIEYKNIESIPMEKIIEILQKHPNLLILNPSYQKSIFLSFKNIEKSEKINYIYKNINLLKTST</sequence>
<feature type="chain" id="PRO_0000102163" description="Transcription-repair-coupling factor">
    <location>
        <begin position="1"/>
        <end position="1125"/>
    </location>
</feature>
<feature type="domain" description="Helicase ATP-binding" evidence="1">
    <location>
        <begin position="597"/>
        <end position="758"/>
    </location>
</feature>
<feature type="domain" description="Helicase C-terminal" evidence="1">
    <location>
        <begin position="774"/>
        <end position="933"/>
    </location>
</feature>
<feature type="short sequence motif" description="DEEQ box">
    <location>
        <begin position="711"/>
        <end position="714"/>
    </location>
</feature>
<feature type="binding site" evidence="1">
    <location>
        <begin position="610"/>
        <end position="617"/>
    </location>
    <ligand>
        <name>ATP</name>
        <dbReference type="ChEBI" id="CHEBI:30616"/>
    </ligand>
</feature>
<protein>
    <recommendedName>
        <fullName evidence="1">Transcription-repair-coupling factor</fullName>
        <shortName evidence="1">TRCF</shortName>
        <ecNumber evidence="1">3.6.4.-</ecNumber>
    </recommendedName>
</protein>
<comment type="function">
    <text evidence="1">Couples transcription and DNA repair by recognizing RNA polymerase (RNAP) stalled at DNA lesions. Mediates ATP-dependent release of RNAP and its truncated transcript from the DNA, and recruitment of nucleotide excision repair machinery to the damaged site.</text>
</comment>
<comment type="subcellular location">
    <subcellularLocation>
        <location evidence="1">Cytoplasm</location>
    </subcellularLocation>
</comment>
<comment type="similarity">
    <text evidence="1">In the N-terminal section; belongs to the UvrB family.</text>
</comment>
<comment type="similarity">
    <text evidence="1">In the C-terminal section; belongs to the helicase family. RecG subfamily.</text>
</comment>
<dbReference type="EC" id="3.6.4.-" evidence="1"/>
<dbReference type="EMBL" id="AE000783">
    <property type="protein sequence ID" value="AAC66973.1"/>
    <property type="molecule type" value="Genomic_DNA"/>
</dbReference>
<dbReference type="PIR" id="F70177">
    <property type="entry name" value="F70177"/>
</dbReference>
<dbReference type="RefSeq" id="NP_212757.1">
    <property type="nucleotide sequence ID" value="NC_001318.1"/>
</dbReference>
<dbReference type="RefSeq" id="WP_010889782.1">
    <property type="nucleotide sequence ID" value="NC_001318.1"/>
</dbReference>
<dbReference type="SMR" id="O51568"/>
<dbReference type="STRING" id="224326.BB_0623"/>
<dbReference type="PaxDb" id="224326-BB_0623"/>
<dbReference type="EnsemblBacteria" id="AAC66973">
    <property type="protein sequence ID" value="AAC66973"/>
    <property type="gene ID" value="BB_0623"/>
</dbReference>
<dbReference type="KEGG" id="bbu:BB_0623"/>
<dbReference type="PATRIC" id="fig|224326.49.peg.1013"/>
<dbReference type="HOGENOM" id="CLU_005122_1_3_12"/>
<dbReference type="OrthoDB" id="9804325at2"/>
<dbReference type="Proteomes" id="UP000001807">
    <property type="component" value="Chromosome"/>
</dbReference>
<dbReference type="GO" id="GO:0005737">
    <property type="term" value="C:cytoplasm"/>
    <property type="evidence" value="ECO:0007669"/>
    <property type="project" value="UniProtKB-SubCell"/>
</dbReference>
<dbReference type="GO" id="GO:0005524">
    <property type="term" value="F:ATP binding"/>
    <property type="evidence" value="ECO:0007669"/>
    <property type="project" value="UniProtKB-UniRule"/>
</dbReference>
<dbReference type="GO" id="GO:0003684">
    <property type="term" value="F:damaged DNA binding"/>
    <property type="evidence" value="ECO:0007669"/>
    <property type="project" value="InterPro"/>
</dbReference>
<dbReference type="GO" id="GO:0003678">
    <property type="term" value="F:DNA helicase activity"/>
    <property type="evidence" value="ECO:0007669"/>
    <property type="project" value="TreeGrafter"/>
</dbReference>
<dbReference type="GO" id="GO:0016787">
    <property type="term" value="F:hydrolase activity"/>
    <property type="evidence" value="ECO:0007669"/>
    <property type="project" value="UniProtKB-KW"/>
</dbReference>
<dbReference type="GO" id="GO:0006355">
    <property type="term" value="P:regulation of DNA-templated transcription"/>
    <property type="evidence" value="ECO:0007669"/>
    <property type="project" value="UniProtKB-UniRule"/>
</dbReference>
<dbReference type="GO" id="GO:0000716">
    <property type="term" value="P:transcription-coupled nucleotide-excision repair, DNA damage recognition"/>
    <property type="evidence" value="ECO:0007669"/>
    <property type="project" value="UniProtKB-UniRule"/>
</dbReference>
<dbReference type="CDD" id="cd17991">
    <property type="entry name" value="DEXHc_TRCF"/>
    <property type="match status" value="1"/>
</dbReference>
<dbReference type="CDD" id="cd18810">
    <property type="entry name" value="SF2_C_TRCF"/>
    <property type="match status" value="1"/>
</dbReference>
<dbReference type="Gene3D" id="2.40.10.170">
    <property type="match status" value="1"/>
</dbReference>
<dbReference type="Gene3D" id="3.40.50.11180">
    <property type="match status" value="1"/>
</dbReference>
<dbReference type="Gene3D" id="3.40.50.300">
    <property type="entry name" value="P-loop containing nucleotide triphosphate hydrolases"/>
    <property type="match status" value="2"/>
</dbReference>
<dbReference type="Gene3D" id="3.30.2060.10">
    <property type="entry name" value="Penicillin-binding protein 1b domain"/>
    <property type="match status" value="1"/>
</dbReference>
<dbReference type="Gene3D" id="3.90.1150.50">
    <property type="entry name" value="Transcription-repair-coupling factor, D7 domain"/>
    <property type="match status" value="1"/>
</dbReference>
<dbReference type="HAMAP" id="MF_00969">
    <property type="entry name" value="TRCF"/>
    <property type="match status" value="1"/>
</dbReference>
<dbReference type="InterPro" id="IPR003711">
    <property type="entry name" value="CarD-like/TRCF_RID"/>
</dbReference>
<dbReference type="InterPro" id="IPR036101">
    <property type="entry name" value="CarD-like/TRCF_RID_sf"/>
</dbReference>
<dbReference type="InterPro" id="IPR011545">
    <property type="entry name" value="DEAD/DEAH_box_helicase_dom"/>
</dbReference>
<dbReference type="InterPro" id="IPR014001">
    <property type="entry name" value="Helicase_ATP-bd"/>
</dbReference>
<dbReference type="InterPro" id="IPR001650">
    <property type="entry name" value="Helicase_C-like"/>
</dbReference>
<dbReference type="InterPro" id="IPR004576">
    <property type="entry name" value="Mfd"/>
</dbReference>
<dbReference type="InterPro" id="IPR027417">
    <property type="entry name" value="P-loop_NTPase"/>
</dbReference>
<dbReference type="InterPro" id="IPR047112">
    <property type="entry name" value="RecG/Mfd"/>
</dbReference>
<dbReference type="InterPro" id="IPR037235">
    <property type="entry name" value="TRCF-like_C_D7"/>
</dbReference>
<dbReference type="InterPro" id="IPR005118">
    <property type="entry name" value="TRCF_C"/>
</dbReference>
<dbReference type="InterPro" id="IPR041471">
    <property type="entry name" value="UvrB_inter"/>
</dbReference>
<dbReference type="NCBIfam" id="TIGR00580">
    <property type="entry name" value="mfd"/>
    <property type="match status" value="1"/>
</dbReference>
<dbReference type="PANTHER" id="PTHR47964">
    <property type="entry name" value="ATP-DEPENDENT DNA HELICASE HOMOLOG RECG, CHLOROPLASTIC"/>
    <property type="match status" value="1"/>
</dbReference>
<dbReference type="PANTHER" id="PTHR47964:SF1">
    <property type="entry name" value="ATP-DEPENDENT DNA HELICASE HOMOLOG RECG, CHLOROPLASTIC"/>
    <property type="match status" value="1"/>
</dbReference>
<dbReference type="Pfam" id="PF02559">
    <property type="entry name" value="CarD_TRCF_RID"/>
    <property type="match status" value="1"/>
</dbReference>
<dbReference type="Pfam" id="PF00270">
    <property type="entry name" value="DEAD"/>
    <property type="match status" value="1"/>
</dbReference>
<dbReference type="Pfam" id="PF00271">
    <property type="entry name" value="Helicase_C"/>
    <property type="match status" value="1"/>
</dbReference>
<dbReference type="Pfam" id="PF03461">
    <property type="entry name" value="TRCF"/>
    <property type="match status" value="1"/>
</dbReference>
<dbReference type="Pfam" id="PF17757">
    <property type="entry name" value="UvrB_inter"/>
    <property type="match status" value="1"/>
</dbReference>
<dbReference type="SMART" id="SM01058">
    <property type="entry name" value="CarD_TRCF"/>
    <property type="match status" value="1"/>
</dbReference>
<dbReference type="SMART" id="SM00487">
    <property type="entry name" value="DEXDc"/>
    <property type="match status" value="1"/>
</dbReference>
<dbReference type="SMART" id="SM00490">
    <property type="entry name" value="HELICc"/>
    <property type="match status" value="1"/>
</dbReference>
<dbReference type="SMART" id="SM00982">
    <property type="entry name" value="TRCF"/>
    <property type="match status" value="1"/>
</dbReference>
<dbReference type="SUPFAM" id="SSF141259">
    <property type="entry name" value="CarD-like"/>
    <property type="match status" value="1"/>
</dbReference>
<dbReference type="SUPFAM" id="SSF52540">
    <property type="entry name" value="P-loop containing nucleoside triphosphate hydrolases"/>
    <property type="match status" value="4"/>
</dbReference>
<dbReference type="SUPFAM" id="SSF143517">
    <property type="entry name" value="TRCF domain-like"/>
    <property type="match status" value="1"/>
</dbReference>
<dbReference type="PROSITE" id="PS51192">
    <property type="entry name" value="HELICASE_ATP_BIND_1"/>
    <property type="match status" value="1"/>
</dbReference>
<dbReference type="PROSITE" id="PS51194">
    <property type="entry name" value="HELICASE_CTER"/>
    <property type="match status" value="1"/>
</dbReference>
<organism>
    <name type="scientific">Borreliella burgdorferi (strain ATCC 35210 / DSM 4680 / CIP 102532 / B31)</name>
    <name type="common">Borrelia burgdorferi</name>
    <dbReference type="NCBI Taxonomy" id="224326"/>
    <lineage>
        <taxon>Bacteria</taxon>
        <taxon>Pseudomonadati</taxon>
        <taxon>Spirochaetota</taxon>
        <taxon>Spirochaetia</taxon>
        <taxon>Spirochaetales</taxon>
        <taxon>Borreliaceae</taxon>
        <taxon>Borreliella</taxon>
    </lineage>
</organism>
<gene>
    <name evidence="1" type="primary">mfd</name>
    <name type="ordered locus">BB_0623</name>
</gene>
<accession>O51568</accession>
<keyword id="KW-0067">ATP-binding</keyword>
<keyword id="KW-0963">Cytoplasm</keyword>
<keyword id="KW-0227">DNA damage</keyword>
<keyword id="KW-0234">DNA repair</keyword>
<keyword id="KW-0238">DNA-binding</keyword>
<keyword id="KW-0347">Helicase</keyword>
<keyword id="KW-0378">Hydrolase</keyword>
<keyword id="KW-0547">Nucleotide-binding</keyword>
<keyword id="KW-1185">Reference proteome</keyword>
<proteinExistence type="inferred from homology"/>
<reference key="1">
    <citation type="journal article" date="1997" name="Nature">
        <title>Genomic sequence of a Lyme disease spirochaete, Borrelia burgdorferi.</title>
        <authorList>
            <person name="Fraser C.M."/>
            <person name="Casjens S."/>
            <person name="Huang W.M."/>
            <person name="Sutton G.G."/>
            <person name="Clayton R.A."/>
            <person name="Lathigra R."/>
            <person name="White O."/>
            <person name="Ketchum K.A."/>
            <person name="Dodson R.J."/>
            <person name="Hickey E.K."/>
            <person name="Gwinn M.L."/>
            <person name="Dougherty B.A."/>
            <person name="Tomb J.-F."/>
            <person name="Fleischmann R.D."/>
            <person name="Richardson D.L."/>
            <person name="Peterson J.D."/>
            <person name="Kerlavage A.R."/>
            <person name="Quackenbush J."/>
            <person name="Salzberg S.L."/>
            <person name="Hanson M."/>
            <person name="van Vugt R."/>
            <person name="Palmer N."/>
            <person name="Adams M.D."/>
            <person name="Gocayne J.D."/>
            <person name="Weidman J.F."/>
            <person name="Utterback T.R."/>
            <person name="Watthey L."/>
            <person name="McDonald L.A."/>
            <person name="Artiach P."/>
            <person name="Bowman C."/>
            <person name="Garland S.A."/>
            <person name="Fujii C."/>
            <person name="Cotton M.D."/>
            <person name="Horst K."/>
            <person name="Roberts K.M."/>
            <person name="Hatch B."/>
            <person name="Smith H.O."/>
            <person name="Venter J.C."/>
        </authorList>
    </citation>
    <scope>NUCLEOTIDE SEQUENCE [LARGE SCALE GENOMIC DNA]</scope>
    <source>
        <strain>ATCC 35210 / DSM 4680 / CIP 102532 / B31</strain>
    </source>
</reference>
<evidence type="ECO:0000255" key="1">
    <source>
        <dbReference type="HAMAP-Rule" id="MF_00969"/>
    </source>
</evidence>
<name>MFD_BORBU</name>